<comment type="function">
    <text evidence="1">Catalyzes the dephosphorylation of the nucleoside 5'-monophosphates deoxyadenosine monophosphate (dAMP), deoxycytidine monophosphate (dCMP), deoxyguanosine monophosphate (dGMP) and deoxythymidine monophosphate (dTMP).</text>
</comment>
<comment type="catalytic activity">
    <reaction evidence="1">
        <text>a 2'-deoxyribonucleoside 5'-phosphate + H2O = a 2'-deoxyribonucleoside + phosphate</text>
        <dbReference type="Rhea" id="RHEA:36167"/>
        <dbReference type="ChEBI" id="CHEBI:15377"/>
        <dbReference type="ChEBI" id="CHEBI:18274"/>
        <dbReference type="ChEBI" id="CHEBI:43474"/>
        <dbReference type="ChEBI" id="CHEBI:65317"/>
        <dbReference type="EC" id="3.1.3.89"/>
    </reaction>
</comment>
<comment type="cofactor">
    <cofactor evidence="1">
        <name>Mn(2+)</name>
        <dbReference type="ChEBI" id="CHEBI:29035"/>
    </cofactor>
    <cofactor evidence="1">
        <name>Co(2+)</name>
        <dbReference type="ChEBI" id="CHEBI:48828"/>
    </cofactor>
    <cofactor evidence="1">
        <name>Mg(2+)</name>
        <dbReference type="ChEBI" id="CHEBI:18420"/>
    </cofactor>
    <text evidence="1 2">Binds 2 divalent metal cations (By similarity). Shows activity with Mn(2+), Co(2+) and Mg(2+) but shows no activity with Zn(2+) (By similarity).</text>
</comment>
<comment type="subunit">
    <text evidence="1">Homodimer.</text>
</comment>
<comment type="similarity">
    <text evidence="4">Belongs to the HDDC2 family.</text>
</comment>
<comment type="sequence caution" evidence="4">
    <conflict type="erroneous initiation">
        <sequence resource="EMBL-CDS" id="AAH95766"/>
    </conflict>
</comment>
<protein>
    <recommendedName>
        <fullName>5'-deoxynucleotidase HDDC2</fullName>
        <ecNumber evidence="1">3.1.3.89</ecNumber>
    </recommendedName>
    <alternativeName>
        <fullName>HD domain-containing protein 2</fullName>
    </alternativeName>
</protein>
<proteinExistence type="evidence at transcript level"/>
<keyword id="KW-0170">Cobalt</keyword>
<keyword id="KW-0378">Hydrolase</keyword>
<keyword id="KW-0460">Magnesium</keyword>
<keyword id="KW-0464">Manganese</keyword>
<keyword id="KW-0479">Metal-binding</keyword>
<keyword id="KW-1185">Reference proteome</keyword>
<sequence>MDNMLQFMKLVGQLKRVPRTGWVYRNIKQPESVSDHMYRMSMMALTIQDISVNKERCMKLALVHDLAECIVGDIAPADNVSKAEKHRREKDAMVHITGLLDDGLRKEIYNLWEEYETQSSPEAKLVKELDNLEMIIQAHEYEELEGKPGRLQEFFVSTEGKFHHPEVLGLLKSLNEERARHIAAGGEKTTDTDSLTLAKP</sequence>
<gene>
    <name type="primary">hddc2</name>
    <name type="ORF">si:ch211-208c9.2</name>
    <name type="ORF">zgc:112330</name>
</gene>
<feature type="chain" id="PRO_0000311391" description="5'-deoxynucleotidase HDDC2">
    <location>
        <begin position="1"/>
        <end position="200"/>
    </location>
</feature>
<feature type="domain" description="HD" evidence="3">
    <location>
        <begin position="33"/>
        <end position="135"/>
    </location>
</feature>
<feature type="binding site" evidence="2">
    <location>
        <position position="36"/>
    </location>
    <ligand>
        <name>a divalent metal cation</name>
        <dbReference type="ChEBI" id="CHEBI:60240"/>
        <label>1</label>
    </ligand>
</feature>
<feature type="binding site" evidence="2">
    <location>
        <position position="64"/>
    </location>
    <ligand>
        <name>a divalent metal cation</name>
        <dbReference type="ChEBI" id="CHEBI:60240"/>
        <label>1</label>
    </ligand>
</feature>
<feature type="binding site" evidence="2">
    <location>
        <position position="65"/>
    </location>
    <ligand>
        <name>a divalent metal cation</name>
        <dbReference type="ChEBI" id="CHEBI:60240"/>
        <label>1</label>
    </ligand>
</feature>
<feature type="binding site" evidence="2">
    <location>
        <position position="68"/>
    </location>
    <ligand>
        <name>a divalent metal cation</name>
        <dbReference type="ChEBI" id="CHEBI:60240"/>
        <label>2</label>
    </ligand>
</feature>
<feature type="binding site" evidence="2">
    <location>
        <position position="73"/>
    </location>
    <ligand>
        <name>a divalent metal cation</name>
        <dbReference type="ChEBI" id="CHEBI:60240"/>
        <label>2</label>
    </ligand>
</feature>
<feature type="binding site" evidence="2">
    <location>
        <position position="74"/>
    </location>
    <ligand>
        <name>a divalent metal cation</name>
        <dbReference type="ChEBI" id="CHEBI:60240"/>
        <label>2</label>
    </ligand>
</feature>
<feature type="binding site" evidence="2">
    <location>
        <position position="130"/>
    </location>
    <ligand>
        <name>a divalent metal cation</name>
        <dbReference type="ChEBI" id="CHEBI:60240"/>
        <label>1</label>
    </ligand>
</feature>
<reference key="1">
    <citation type="journal article" date="2013" name="Nature">
        <title>The zebrafish reference genome sequence and its relationship to the human genome.</title>
        <authorList>
            <person name="Howe K."/>
            <person name="Clark M.D."/>
            <person name="Torroja C.F."/>
            <person name="Torrance J."/>
            <person name="Berthelot C."/>
            <person name="Muffato M."/>
            <person name="Collins J.E."/>
            <person name="Humphray S."/>
            <person name="McLaren K."/>
            <person name="Matthews L."/>
            <person name="McLaren S."/>
            <person name="Sealy I."/>
            <person name="Caccamo M."/>
            <person name="Churcher C."/>
            <person name="Scott C."/>
            <person name="Barrett J.C."/>
            <person name="Koch R."/>
            <person name="Rauch G.J."/>
            <person name="White S."/>
            <person name="Chow W."/>
            <person name="Kilian B."/>
            <person name="Quintais L.T."/>
            <person name="Guerra-Assuncao J.A."/>
            <person name="Zhou Y."/>
            <person name="Gu Y."/>
            <person name="Yen J."/>
            <person name="Vogel J.H."/>
            <person name="Eyre T."/>
            <person name="Redmond S."/>
            <person name="Banerjee R."/>
            <person name="Chi J."/>
            <person name="Fu B."/>
            <person name="Langley E."/>
            <person name="Maguire S.F."/>
            <person name="Laird G.K."/>
            <person name="Lloyd D."/>
            <person name="Kenyon E."/>
            <person name="Donaldson S."/>
            <person name="Sehra H."/>
            <person name="Almeida-King J."/>
            <person name="Loveland J."/>
            <person name="Trevanion S."/>
            <person name="Jones M."/>
            <person name="Quail M."/>
            <person name="Willey D."/>
            <person name="Hunt A."/>
            <person name="Burton J."/>
            <person name="Sims S."/>
            <person name="McLay K."/>
            <person name="Plumb B."/>
            <person name="Davis J."/>
            <person name="Clee C."/>
            <person name="Oliver K."/>
            <person name="Clark R."/>
            <person name="Riddle C."/>
            <person name="Elliot D."/>
            <person name="Threadgold G."/>
            <person name="Harden G."/>
            <person name="Ware D."/>
            <person name="Begum S."/>
            <person name="Mortimore B."/>
            <person name="Kerry G."/>
            <person name="Heath P."/>
            <person name="Phillimore B."/>
            <person name="Tracey A."/>
            <person name="Corby N."/>
            <person name="Dunn M."/>
            <person name="Johnson C."/>
            <person name="Wood J."/>
            <person name="Clark S."/>
            <person name="Pelan S."/>
            <person name="Griffiths G."/>
            <person name="Smith M."/>
            <person name="Glithero R."/>
            <person name="Howden P."/>
            <person name="Barker N."/>
            <person name="Lloyd C."/>
            <person name="Stevens C."/>
            <person name="Harley J."/>
            <person name="Holt K."/>
            <person name="Panagiotidis G."/>
            <person name="Lovell J."/>
            <person name="Beasley H."/>
            <person name="Henderson C."/>
            <person name="Gordon D."/>
            <person name="Auger K."/>
            <person name="Wright D."/>
            <person name="Collins J."/>
            <person name="Raisen C."/>
            <person name="Dyer L."/>
            <person name="Leung K."/>
            <person name="Robertson L."/>
            <person name="Ambridge K."/>
            <person name="Leongamornlert D."/>
            <person name="McGuire S."/>
            <person name="Gilderthorp R."/>
            <person name="Griffiths C."/>
            <person name="Manthravadi D."/>
            <person name="Nichol S."/>
            <person name="Barker G."/>
            <person name="Whitehead S."/>
            <person name="Kay M."/>
            <person name="Brown J."/>
            <person name="Murnane C."/>
            <person name="Gray E."/>
            <person name="Humphries M."/>
            <person name="Sycamore N."/>
            <person name="Barker D."/>
            <person name="Saunders D."/>
            <person name="Wallis J."/>
            <person name="Babbage A."/>
            <person name="Hammond S."/>
            <person name="Mashreghi-Mohammadi M."/>
            <person name="Barr L."/>
            <person name="Martin S."/>
            <person name="Wray P."/>
            <person name="Ellington A."/>
            <person name="Matthews N."/>
            <person name="Ellwood M."/>
            <person name="Woodmansey R."/>
            <person name="Clark G."/>
            <person name="Cooper J."/>
            <person name="Tromans A."/>
            <person name="Grafham D."/>
            <person name="Skuce C."/>
            <person name="Pandian R."/>
            <person name="Andrews R."/>
            <person name="Harrison E."/>
            <person name="Kimberley A."/>
            <person name="Garnett J."/>
            <person name="Fosker N."/>
            <person name="Hall R."/>
            <person name="Garner P."/>
            <person name="Kelly D."/>
            <person name="Bird C."/>
            <person name="Palmer S."/>
            <person name="Gehring I."/>
            <person name="Berger A."/>
            <person name="Dooley C.M."/>
            <person name="Ersan-Urun Z."/>
            <person name="Eser C."/>
            <person name="Geiger H."/>
            <person name="Geisler M."/>
            <person name="Karotki L."/>
            <person name="Kirn A."/>
            <person name="Konantz J."/>
            <person name="Konantz M."/>
            <person name="Oberlander M."/>
            <person name="Rudolph-Geiger S."/>
            <person name="Teucke M."/>
            <person name="Lanz C."/>
            <person name="Raddatz G."/>
            <person name="Osoegawa K."/>
            <person name="Zhu B."/>
            <person name="Rapp A."/>
            <person name="Widaa S."/>
            <person name="Langford C."/>
            <person name="Yang F."/>
            <person name="Schuster S.C."/>
            <person name="Carter N.P."/>
            <person name="Harrow J."/>
            <person name="Ning Z."/>
            <person name="Herrero J."/>
            <person name="Searle S.M."/>
            <person name="Enright A."/>
            <person name="Geisler R."/>
            <person name="Plasterk R.H."/>
            <person name="Lee C."/>
            <person name="Westerfield M."/>
            <person name="de Jong P.J."/>
            <person name="Zon L.I."/>
            <person name="Postlethwait J.H."/>
            <person name="Nusslein-Volhard C."/>
            <person name="Hubbard T.J."/>
            <person name="Roest Crollius H."/>
            <person name="Rogers J."/>
            <person name="Stemple D.L."/>
        </authorList>
    </citation>
    <scope>NUCLEOTIDE SEQUENCE [LARGE SCALE GENOMIC DNA]</scope>
    <source>
        <strain>Tuebingen</strain>
    </source>
</reference>
<reference key="2">
    <citation type="submission" date="2005-05" db="EMBL/GenBank/DDBJ databases">
        <authorList>
            <consortium name="NIH - Zebrafish Gene Collection (ZGC) project"/>
        </authorList>
    </citation>
    <scope>NUCLEOTIDE SEQUENCE [LARGE SCALE MRNA]</scope>
    <source>
        <tissue>Eye</tissue>
    </source>
</reference>
<name>HDDC2_DANRE</name>
<organism>
    <name type="scientific">Danio rerio</name>
    <name type="common">Zebrafish</name>
    <name type="synonym">Brachydanio rerio</name>
    <dbReference type="NCBI Taxonomy" id="7955"/>
    <lineage>
        <taxon>Eukaryota</taxon>
        <taxon>Metazoa</taxon>
        <taxon>Chordata</taxon>
        <taxon>Craniata</taxon>
        <taxon>Vertebrata</taxon>
        <taxon>Euteleostomi</taxon>
        <taxon>Actinopterygii</taxon>
        <taxon>Neopterygii</taxon>
        <taxon>Teleostei</taxon>
        <taxon>Ostariophysi</taxon>
        <taxon>Cypriniformes</taxon>
        <taxon>Danionidae</taxon>
        <taxon>Danioninae</taxon>
        <taxon>Danio</taxon>
    </lineage>
</organism>
<dbReference type="EC" id="3.1.3.89" evidence="1"/>
<dbReference type="EMBL" id="BX936317">
    <property type="protein sequence ID" value="CAK04454.1"/>
    <property type="molecule type" value="Genomic_DNA"/>
</dbReference>
<dbReference type="EMBL" id="BC095766">
    <property type="protein sequence ID" value="AAH95766.1"/>
    <property type="status" value="ALT_INIT"/>
    <property type="molecule type" value="mRNA"/>
</dbReference>
<dbReference type="RefSeq" id="NP_001038696.1">
    <property type="nucleotide sequence ID" value="NM_001045231.1"/>
</dbReference>
<dbReference type="SMR" id="Q1LUI2"/>
<dbReference type="FunCoup" id="Q1LUI2">
    <property type="interactions" value="1522"/>
</dbReference>
<dbReference type="STRING" id="7955.ENSDARP00000050728"/>
<dbReference type="PaxDb" id="7955-ENSDARP00000050728"/>
<dbReference type="Ensembl" id="ENSDART00000050729">
    <property type="protein sequence ID" value="ENSDARP00000050728"/>
    <property type="gene ID" value="ENSDARG00000034957"/>
</dbReference>
<dbReference type="GeneID" id="554129"/>
<dbReference type="KEGG" id="dre:554129"/>
<dbReference type="AGR" id="ZFIN:ZDB-GENE-050522-394"/>
<dbReference type="CTD" id="51020"/>
<dbReference type="ZFIN" id="ZDB-GENE-050522-394">
    <property type="gene designation" value="hddc2"/>
</dbReference>
<dbReference type="eggNOG" id="KOG3197">
    <property type="taxonomic scope" value="Eukaryota"/>
</dbReference>
<dbReference type="HOGENOM" id="CLU_039453_2_1_1"/>
<dbReference type="InParanoid" id="Q1LUI2"/>
<dbReference type="OMA" id="TWRLCLM"/>
<dbReference type="OrthoDB" id="10254258at2759"/>
<dbReference type="PhylomeDB" id="Q1LUI2"/>
<dbReference type="TreeFam" id="TF313855"/>
<dbReference type="PRO" id="PR:Q1LUI2"/>
<dbReference type="Proteomes" id="UP000000437">
    <property type="component" value="Chromosome 20"/>
</dbReference>
<dbReference type="Bgee" id="ENSDARG00000034957">
    <property type="expression patterns" value="Expressed in mature ovarian follicle and 28 other cell types or tissues"/>
</dbReference>
<dbReference type="ExpressionAtlas" id="Q1LUI2">
    <property type="expression patterns" value="baseline and differential"/>
</dbReference>
<dbReference type="GO" id="GO:0002953">
    <property type="term" value="F:5'-deoxynucleotidase activity"/>
    <property type="evidence" value="ECO:0000318"/>
    <property type="project" value="GO_Central"/>
</dbReference>
<dbReference type="GO" id="GO:0046872">
    <property type="term" value="F:metal ion binding"/>
    <property type="evidence" value="ECO:0007669"/>
    <property type="project" value="UniProtKB-KW"/>
</dbReference>
<dbReference type="FunFam" id="1.10.3210.10:FF:000011">
    <property type="entry name" value="HD domain-containing protein 2"/>
    <property type="match status" value="1"/>
</dbReference>
<dbReference type="Gene3D" id="1.10.3210.10">
    <property type="entry name" value="Hypothetical protein af1432"/>
    <property type="match status" value="1"/>
</dbReference>
<dbReference type="InterPro" id="IPR003607">
    <property type="entry name" value="HD/PDEase_dom"/>
</dbReference>
<dbReference type="InterPro" id="IPR006674">
    <property type="entry name" value="HD_domain"/>
</dbReference>
<dbReference type="InterPro" id="IPR039356">
    <property type="entry name" value="YfbR/HDDC2"/>
</dbReference>
<dbReference type="PANTHER" id="PTHR11845">
    <property type="entry name" value="5'-DEOXYNUCLEOTIDASE HDDC2"/>
    <property type="match status" value="1"/>
</dbReference>
<dbReference type="PANTHER" id="PTHR11845:SF13">
    <property type="entry name" value="5'-DEOXYNUCLEOTIDASE HDDC2"/>
    <property type="match status" value="1"/>
</dbReference>
<dbReference type="Pfam" id="PF13023">
    <property type="entry name" value="HD_3"/>
    <property type="match status" value="1"/>
</dbReference>
<dbReference type="SMART" id="SM00471">
    <property type="entry name" value="HDc"/>
    <property type="match status" value="1"/>
</dbReference>
<dbReference type="SUPFAM" id="SSF109604">
    <property type="entry name" value="HD-domain/PDEase-like"/>
    <property type="match status" value="1"/>
</dbReference>
<dbReference type="PROSITE" id="PS51831">
    <property type="entry name" value="HD"/>
    <property type="match status" value="1"/>
</dbReference>
<evidence type="ECO:0000250" key="1">
    <source>
        <dbReference type="UniProtKB" id="P53144"/>
    </source>
</evidence>
<evidence type="ECO:0000250" key="2">
    <source>
        <dbReference type="UniProtKB" id="Q7Z4H3"/>
    </source>
</evidence>
<evidence type="ECO:0000255" key="3">
    <source>
        <dbReference type="PROSITE-ProRule" id="PRU01175"/>
    </source>
</evidence>
<evidence type="ECO:0000305" key="4"/>
<accession>Q1LUI2</accession>
<accession>Q502C2</accession>